<accession>P41818</accession>
<accession>D6W0D8</accession>
<evidence type="ECO:0000256" key="1">
    <source>
        <dbReference type="SAM" id="MobiDB-lite"/>
    </source>
</evidence>
<evidence type="ECO:0000269" key="2">
    <source>
    </source>
</evidence>
<evidence type="ECO:0000269" key="3">
    <source>
    </source>
</evidence>
<evidence type="ECO:0007744" key="4">
    <source>
    </source>
</evidence>
<evidence type="ECO:0007744" key="5">
    <source>
    </source>
</evidence>
<evidence type="ECO:0007744" key="6">
    <source>
    </source>
</evidence>
<evidence type="ECO:0007744" key="7">
    <source>
    </source>
</evidence>
<organism>
    <name type="scientific">Saccharomyces cerevisiae (strain ATCC 204508 / S288c)</name>
    <name type="common">Baker's yeast</name>
    <dbReference type="NCBI Taxonomy" id="559292"/>
    <lineage>
        <taxon>Eukaryota</taxon>
        <taxon>Fungi</taxon>
        <taxon>Dikarya</taxon>
        <taxon>Ascomycota</taxon>
        <taxon>Saccharomycotina</taxon>
        <taxon>Saccharomycetes</taxon>
        <taxon>Saccharomycetales</taxon>
        <taxon>Saccharomycetaceae</taxon>
        <taxon>Saccharomyces</taxon>
    </lineage>
</organism>
<comment type="function">
    <text>Modulator of GLC7 type-1 protein phosphatase.</text>
</comment>
<comment type="interaction">
    <interactant intactId="EBI-7629">
        <id>P41818</id>
    </interactant>
    <interactant intactId="EBI-13715">
        <id>P32598</id>
        <label>GLC7</label>
    </interactant>
    <organismsDiffer>false</organismsDiffer>
    <experiments>6</experiments>
</comment>
<comment type="PTM">
    <text evidence="2">Phosphorylated by the cyclin-CDKs PCL6-PHO85 and PCL7-PHO85. Phosphorylation of Thr-118 inactivates GLC8.</text>
</comment>
<comment type="miscellaneous">
    <text evidence="3">Present with 3440 molecules/cell in log phase SD medium.</text>
</comment>
<name>GLC8_YEAST</name>
<gene>
    <name type="primary">GLC8</name>
    <name type="ordered locus">YMR311C</name>
    <name type="ORF">YM9924.03C</name>
</gene>
<sequence length="229" mass="26649">MGGILKNPLALSPEQLAQQDPETLEEFRRQVYENTQKNAKLTSHKRNIPGLDNTKEEGEIIGTSSTFLPKDTLSLKHEQDMLAKMTPEERVQWNQRNLAENEITKKQFQDIHIDEPKTPYQGAVDPHGEYYRVDDDEDEDNSDKKPCQVANDDIDDLSLGEPEFEIKENKQPDFETNDENDEDSPEARHKKFEEMRKKHYDVRAIFNKKSREALKDEDEDEDDSTTKEP</sequence>
<proteinExistence type="evidence at protein level"/>
<dbReference type="EMBL" id="L22000">
    <property type="protein sequence ID" value="AAA53673.1"/>
    <property type="molecule type" value="Genomic_DNA"/>
</dbReference>
<dbReference type="EMBL" id="Z54141">
    <property type="protein sequence ID" value="CAA90829.1"/>
    <property type="molecule type" value="Genomic_DNA"/>
</dbReference>
<dbReference type="EMBL" id="AY557977">
    <property type="protein sequence ID" value="AAS56303.1"/>
    <property type="molecule type" value="Genomic_DNA"/>
</dbReference>
<dbReference type="EMBL" id="BK006946">
    <property type="protein sequence ID" value="DAA10212.1"/>
    <property type="molecule type" value="Genomic_DNA"/>
</dbReference>
<dbReference type="PIR" id="S47859">
    <property type="entry name" value="S47859"/>
</dbReference>
<dbReference type="RefSeq" id="NP_014042.1">
    <property type="nucleotide sequence ID" value="NM_001182822.1"/>
</dbReference>
<dbReference type="BioGRID" id="35491">
    <property type="interactions" value="134"/>
</dbReference>
<dbReference type="DIP" id="DIP-2349N"/>
<dbReference type="ELM" id="P41818"/>
<dbReference type="FunCoup" id="P41818">
    <property type="interactions" value="342"/>
</dbReference>
<dbReference type="IntAct" id="P41818">
    <property type="interactions" value="9"/>
</dbReference>
<dbReference type="MINT" id="P41818"/>
<dbReference type="STRING" id="4932.YMR311C"/>
<dbReference type="iPTMnet" id="P41818"/>
<dbReference type="PaxDb" id="4932-YMR311C"/>
<dbReference type="PeptideAtlas" id="P41818"/>
<dbReference type="EnsemblFungi" id="YMR311C_mRNA">
    <property type="protein sequence ID" value="YMR311C"/>
    <property type="gene ID" value="YMR311C"/>
</dbReference>
<dbReference type="GeneID" id="855359"/>
<dbReference type="KEGG" id="sce:YMR311C"/>
<dbReference type="AGR" id="SGD:S000004928"/>
<dbReference type="SGD" id="S000004928">
    <property type="gene designation" value="GLC8"/>
</dbReference>
<dbReference type="VEuPathDB" id="FungiDB:YMR311C"/>
<dbReference type="eggNOG" id="ENOG502S2VH">
    <property type="taxonomic scope" value="Eukaryota"/>
</dbReference>
<dbReference type="HOGENOM" id="CLU_070379_1_0_1"/>
<dbReference type="InParanoid" id="P41818"/>
<dbReference type="OMA" id="QQFQDIH"/>
<dbReference type="OrthoDB" id="551302at2759"/>
<dbReference type="BioCyc" id="YEAST:G3O-32975-MONOMER"/>
<dbReference type="BioGRID-ORCS" id="855359">
    <property type="hits" value="0 hits in 10 CRISPR screens"/>
</dbReference>
<dbReference type="PRO" id="PR:P41818"/>
<dbReference type="Proteomes" id="UP000002311">
    <property type="component" value="Chromosome XIII"/>
</dbReference>
<dbReference type="RNAct" id="P41818">
    <property type="molecule type" value="protein"/>
</dbReference>
<dbReference type="GO" id="GO:0005737">
    <property type="term" value="C:cytoplasm"/>
    <property type="evidence" value="ECO:0007005"/>
    <property type="project" value="SGD"/>
</dbReference>
<dbReference type="GO" id="GO:0005634">
    <property type="term" value="C:nucleus"/>
    <property type="evidence" value="ECO:0007005"/>
    <property type="project" value="SGD"/>
</dbReference>
<dbReference type="GO" id="GO:0008047">
    <property type="term" value="F:enzyme activator activity"/>
    <property type="evidence" value="ECO:0000314"/>
    <property type="project" value="SGD"/>
</dbReference>
<dbReference type="GO" id="GO:0004864">
    <property type="term" value="F:protein phosphatase inhibitor activity"/>
    <property type="evidence" value="ECO:0000318"/>
    <property type="project" value="GO_Central"/>
</dbReference>
<dbReference type="GO" id="GO:0007059">
    <property type="term" value="P:chromosome segregation"/>
    <property type="evidence" value="ECO:0000315"/>
    <property type="project" value="SGD"/>
</dbReference>
<dbReference type="GO" id="GO:0005978">
    <property type="term" value="P:glycogen biosynthetic process"/>
    <property type="evidence" value="ECO:0000304"/>
    <property type="project" value="SGD"/>
</dbReference>
<dbReference type="GO" id="GO:0035556">
    <property type="term" value="P:intracellular signal transduction"/>
    <property type="evidence" value="ECO:0000318"/>
    <property type="project" value="GO_Central"/>
</dbReference>
<dbReference type="GO" id="GO:0009966">
    <property type="term" value="P:regulation of signal transduction"/>
    <property type="evidence" value="ECO:0007669"/>
    <property type="project" value="InterPro"/>
</dbReference>
<dbReference type="InterPro" id="IPR007062">
    <property type="entry name" value="PPI-2"/>
</dbReference>
<dbReference type="PANTHER" id="PTHR12398:SF20">
    <property type="entry name" value="PROTEIN PHOSPHATASE 1 REGULATORY INHIBITOR SUBUNIT 2"/>
    <property type="match status" value="1"/>
</dbReference>
<dbReference type="PANTHER" id="PTHR12398">
    <property type="entry name" value="PROTEIN PHOSPHATASE INHIBITOR"/>
    <property type="match status" value="1"/>
</dbReference>
<dbReference type="Pfam" id="PF04979">
    <property type="entry name" value="IPP-2"/>
    <property type="match status" value="1"/>
</dbReference>
<keyword id="KW-0119">Carbohydrate metabolism</keyword>
<keyword id="KW-0321">Glycogen metabolism</keyword>
<keyword id="KW-0597">Phosphoprotein</keyword>
<keyword id="KW-1185">Reference proteome</keyword>
<protein>
    <recommendedName>
        <fullName>Protein GLC8</fullName>
    </recommendedName>
</protein>
<reference key="1">
    <citation type="journal article" date="1994" name="Genetics">
        <title>Characterization of glycogen-deficient glc mutants of Saccharomyces cerevisiae.</title>
        <authorList>
            <person name="Cannon J.F."/>
            <person name="Pringle J.R."/>
            <person name="Fiechter A."/>
            <person name="Khalil M."/>
        </authorList>
    </citation>
    <scope>NUCLEOTIDE SEQUENCE [GENOMIC DNA]</scope>
</reference>
<reference key="2">
    <citation type="journal article" date="1997" name="Nature">
        <title>The nucleotide sequence of Saccharomyces cerevisiae chromosome XIII.</title>
        <authorList>
            <person name="Bowman S."/>
            <person name="Churcher C.M."/>
            <person name="Badcock K."/>
            <person name="Brown D."/>
            <person name="Chillingworth T."/>
            <person name="Connor R."/>
            <person name="Dedman K."/>
            <person name="Devlin K."/>
            <person name="Gentles S."/>
            <person name="Hamlin N."/>
            <person name="Hunt S."/>
            <person name="Jagels K."/>
            <person name="Lye G."/>
            <person name="Moule S."/>
            <person name="Odell C."/>
            <person name="Pearson D."/>
            <person name="Rajandream M.A."/>
            <person name="Rice P."/>
            <person name="Skelton J."/>
            <person name="Walsh S.V."/>
            <person name="Whitehead S."/>
            <person name="Barrell B.G."/>
        </authorList>
    </citation>
    <scope>NUCLEOTIDE SEQUENCE [LARGE SCALE GENOMIC DNA]</scope>
    <source>
        <strain>ATCC 204508 / S288c</strain>
    </source>
</reference>
<reference key="3">
    <citation type="journal article" date="2014" name="G3 (Bethesda)">
        <title>The reference genome sequence of Saccharomyces cerevisiae: Then and now.</title>
        <authorList>
            <person name="Engel S.R."/>
            <person name="Dietrich F.S."/>
            <person name="Fisk D.G."/>
            <person name="Binkley G."/>
            <person name="Balakrishnan R."/>
            <person name="Costanzo M.C."/>
            <person name="Dwight S.S."/>
            <person name="Hitz B.C."/>
            <person name="Karra K."/>
            <person name="Nash R.S."/>
            <person name="Weng S."/>
            <person name="Wong E.D."/>
            <person name="Lloyd P."/>
            <person name="Skrzypek M.S."/>
            <person name="Miyasato S.R."/>
            <person name="Simison M."/>
            <person name="Cherry J.M."/>
        </authorList>
    </citation>
    <scope>GENOME REANNOTATION</scope>
    <source>
        <strain>ATCC 204508 / S288c</strain>
    </source>
</reference>
<reference key="4">
    <citation type="journal article" date="2007" name="Genome Res.">
        <title>Approaching a complete repository of sequence-verified protein-encoding clones for Saccharomyces cerevisiae.</title>
        <authorList>
            <person name="Hu Y."/>
            <person name="Rolfs A."/>
            <person name="Bhullar B."/>
            <person name="Murthy T.V.S."/>
            <person name="Zhu C."/>
            <person name="Berger M.F."/>
            <person name="Camargo A.A."/>
            <person name="Kelley F."/>
            <person name="McCarron S."/>
            <person name="Jepson D."/>
            <person name="Richardson A."/>
            <person name="Raphael J."/>
            <person name="Moreira D."/>
            <person name="Taycher E."/>
            <person name="Zuo D."/>
            <person name="Mohr S."/>
            <person name="Kane M.F."/>
            <person name="Williamson J."/>
            <person name="Simpson A.J.G."/>
            <person name="Bulyk M.L."/>
            <person name="Harlow E."/>
            <person name="Marsischky G."/>
            <person name="Kolodner R.D."/>
            <person name="LaBaer J."/>
        </authorList>
    </citation>
    <scope>NUCLEOTIDE SEQUENCE [GENOMIC DNA]</scope>
    <source>
        <strain>ATCC 204508 / S288c</strain>
    </source>
</reference>
<reference key="5">
    <citation type="journal article" date="2003" name="J. Biol. Chem.">
        <title>Pho85 phosphorylates the Glc7 protein phosphatase regulator Glc8 in vivo.</title>
        <authorList>
            <person name="Tan Y.S.H."/>
            <person name="Morcos P.A."/>
            <person name="Cannon J.F."/>
        </authorList>
    </citation>
    <scope>PHOSPHORYLATION AT THR-118</scope>
</reference>
<reference key="6">
    <citation type="journal article" date="2003" name="Nature">
        <title>Global analysis of protein expression in yeast.</title>
        <authorList>
            <person name="Ghaemmaghami S."/>
            <person name="Huh W.-K."/>
            <person name="Bower K."/>
            <person name="Howson R.W."/>
            <person name="Belle A."/>
            <person name="Dephoure N."/>
            <person name="O'Shea E.K."/>
            <person name="Weissman J.S."/>
        </authorList>
    </citation>
    <scope>LEVEL OF PROTEIN EXPRESSION [LARGE SCALE ANALYSIS]</scope>
</reference>
<reference key="7">
    <citation type="journal article" date="2005" name="Mol. Cell. Proteomics">
        <title>Quantitative phosphoproteomics applied to the yeast pheromone signaling pathway.</title>
        <authorList>
            <person name="Gruhler A."/>
            <person name="Olsen J.V."/>
            <person name="Mohammed S."/>
            <person name="Mortensen P."/>
            <person name="Faergeman N.J."/>
            <person name="Mann M."/>
            <person name="Jensen O.N."/>
        </authorList>
    </citation>
    <scope>PHOSPHORYLATION [LARGE SCALE ANALYSIS] AT SER-12</scope>
    <scope>IDENTIFICATION BY MASS SPECTROMETRY [LARGE SCALE ANALYSIS]</scope>
    <source>
        <strain>YAL6B</strain>
    </source>
</reference>
<reference key="8">
    <citation type="journal article" date="2007" name="J. Proteome Res.">
        <title>Large-scale phosphorylation analysis of alpha-factor-arrested Saccharomyces cerevisiae.</title>
        <authorList>
            <person name="Li X."/>
            <person name="Gerber S.A."/>
            <person name="Rudner A.D."/>
            <person name="Beausoleil S.A."/>
            <person name="Haas W."/>
            <person name="Villen J."/>
            <person name="Elias J.E."/>
            <person name="Gygi S.P."/>
        </authorList>
    </citation>
    <scope>PHOSPHORYLATION [LARGE SCALE ANALYSIS] AT SER-158</scope>
    <scope>IDENTIFICATION BY MASS SPECTROMETRY [LARGE SCALE ANALYSIS]</scope>
    <source>
        <strain>ADR376</strain>
    </source>
</reference>
<reference key="9">
    <citation type="journal article" date="2008" name="Mol. Cell. Proteomics">
        <title>A multidimensional chromatography technology for in-depth phosphoproteome analysis.</title>
        <authorList>
            <person name="Albuquerque C.P."/>
            <person name="Smolka M.B."/>
            <person name="Payne S.H."/>
            <person name="Bafna V."/>
            <person name="Eng J."/>
            <person name="Zhou H."/>
        </authorList>
    </citation>
    <scope>PHOSPHORYLATION [LARGE SCALE ANALYSIS] AT SER-12; SER-158 AND SER-184</scope>
    <scope>IDENTIFICATION BY MASS SPECTROMETRY [LARGE SCALE ANALYSIS]</scope>
</reference>
<reference key="10">
    <citation type="journal article" date="2009" name="Science">
        <title>Global analysis of Cdk1 substrate phosphorylation sites provides insights into evolution.</title>
        <authorList>
            <person name="Holt L.J."/>
            <person name="Tuch B.B."/>
            <person name="Villen J."/>
            <person name="Johnson A.D."/>
            <person name="Gygi S.P."/>
            <person name="Morgan D.O."/>
        </authorList>
    </citation>
    <scope>PHOSPHORYLATION [LARGE SCALE ANALYSIS] AT SER-12; SER-158 AND SER-184</scope>
    <scope>IDENTIFICATION BY MASS SPECTROMETRY [LARGE SCALE ANALYSIS]</scope>
</reference>
<reference key="11">
    <citation type="journal article" date="2012" name="Proc. Natl. Acad. Sci. U.S.A.">
        <title>N-terminal acetylome analyses and functional insights of the N-terminal acetyltransferase NatB.</title>
        <authorList>
            <person name="Van Damme P."/>
            <person name="Lasa M."/>
            <person name="Polevoda B."/>
            <person name="Gazquez C."/>
            <person name="Elosegui-Artola A."/>
            <person name="Kim D.S."/>
            <person name="De Juan-Pardo E."/>
            <person name="Demeyer K."/>
            <person name="Hole K."/>
            <person name="Larrea E."/>
            <person name="Timmerman E."/>
            <person name="Prieto J."/>
            <person name="Arnesen T."/>
            <person name="Sherman F."/>
            <person name="Gevaert K."/>
            <person name="Aldabe R."/>
        </authorList>
    </citation>
    <scope>IDENTIFICATION BY MASS SPECTROMETRY [LARGE SCALE ANALYSIS]</scope>
</reference>
<feature type="chain" id="PRO_0000071517" description="Protein GLC8">
    <location>
        <begin position="1"/>
        <end position="229"/>
    </location>
</feature>
<feature type="region of interest" description="Disordered" evidence="1">
    <location>
        <begin position="1"/>
        <end position="21"/>
    </location>
</feature>
<feature type="region of interest" description="Disordered" evidence="1">
    <location>
        <begin position="35"/>
        <end position="62"/>
    </location>
</feature>
<feature type="region of interest" description="Disordered" evidence="1">
    <location>
        <begin position="107"/>
        <end position="229"/>
    </location>
</feature>
<feature type="compositionally biased region" description="Basic and acidic residues" evidence="1">
    <location>
        <begin position="107"/>
        <end position="117"/>
    </location>
</feature>
<feature type="compositionally biased region" description="Basic and acidic residues" evidence="1">
    <location>
        <begin position="164"/>
        <end position="173"/>
    </location>
</feature>
<feature type="compositionally biased region" description="Acidic residues" evidence="1">
    <location>
        <begin position="175"/>
        <end position="184"/>
    </location>
</feature>
<feature type="compositionally biased region" description="Basic and acidic residues" evidence="1">
    <location>
        <begin position="185"/>
        <end position="196"/>
    </location>
</feature>
<feature type="modified residue" description="Phosphoserine" evidence="4 6 7">
    <location>
        <position position="12"/>
    </location>
</feature>
<feature type="modified residue" description="Phosphothreonine; by PHO85" evidence="2">
    <location>
        <position position="118"/>
    </location>
</feature>
<feature type="modified residue" description="Phosphoserine" evidence="5 6 7">
    <location>
        <position position="158"/>
    </location>
</feature>
<feature type="modified residue" description="Phosphoserine" evidence="6 7">
    <location>
        <position position="184"/>
    </location>
</feature>